<protein>
    <recommendedName>
        <fullName>A disintegrin and metalloproteinase with thrombospondin motifs 8</fullName>
        <shortName>ADAM-TS 8</shortName>
        <shortName>ADAM-TS8</shortName>
        <shortName>ADAMTS-8</shortName>
        <ecNumber>3.4.24.-</ecNumber>
    </recommendedName>
    <alternativeName>
        <fullName>METH-2</fullName>
    </alternativeName>
</protein>
<keyword id="KW-0165">Cleavage on pair of basic residues</keyword>
<keyword id="KW-1015">Disulfide bond</keyword>
<keyword id="KW-0272">Extracellular matrix</keyword>
<keyword id="KW-0325">Glycoprotein</keyword>
<keyword id="KW-0358">Heparin-binding</keyword>
<keyword id="KW-0378">Hydrolase</keyword>
<keyword id="KW-0479">Metal-binding</keyword>
<keyword id="KW-0482">Metalloprotease</keyword>
<keyword id="KW-0645">Protease</keyword>
<keyword id="KW-1185">Reference proteome</keyword>
<keyword id="KW-0677">Repeat</keyword>
<keyword id="KW-0964">Secreted</keyword>
<keyword id="KW-0732">Signal</keyword>
<keyword id="KW-0862">Zinc</keyword>
<keyword id="KW-0865">Zymogen</keyword>
<sequence>MLRDPTTTGWPPLLLLLLQLPPPPLVCGAPAGPGTGAQASELVVPTRLPGSASELAFHLSAFGQGFVLRLAPDASFLAPEFKIERLGGSSAAAGGEPGLRGCFFSGTVNGERESLAAMSCVAGWSGSFLLAGEEFTIQPQGAGDSLDQPHRLQRWGPGQRREDPGLAAAEVFPLPQGLEWEVEMGNGQGQERSDNEEDRKQDKEGLLKETEDSRKVPPPFGSKTRSKRFVSEARFVETLLVADASMAAFYGTDLQNHILTVMSMAARIYKHPSIRNSVNLVVVKVLIVEKERWGPEVSDNGGLTLRNFCSWQRRFNKPSDRHPEHYDTAILFTRQNFCGKGEQCDTLGMADVGTICDPDKSCSVIKDEGLQAAYTLAHELGHVLSMPHDDSKPCVRLFGPMGKYHMMAPFFIHVNKTLPWSPCSAVYLTELLDDGHGDCLLDAPTSVLPLPTGLPGHSTLYELDQQCKQIFGPDFRHCPNTSVEDICVQLCARHRDSDEPICHTKNGSLLWADGTPCGPGHLCLDGSCVLKEDVENPKAVVDGDWGPWRPWGQCSRTCGGGIQFSNRECDNPMPQNGGRFCLGERVKYQSCNTEECPPNGKSFREQQCEKYNAYNHTDLDGNFLQWVPKYSGVSPRDRCKLFCRARGRSEFKVFEAKVIDGTLCGPDTLSICVRGQCVKAGCDHVVNSPKKLDKCGVCGGKGTACRKISGSFTPFSYGYNDIVTIPAGATNIDVKQRSHPGVRNDGSYLALKTANGQYLLNGNLAISAIEQDILVKGTILKYSGSMATLERLQSFQALPEPLTVQLLTVSGEVFPPKVRYTFFVPNDMDFSVQNSKERATTNIIQSLPSAEWVLGDWSECPSTCRGSWQRRTVECRDPSGQASDTCDEALKPEDAKPCGSQPCPL</sequence>
<name>ATS8_MOUSE</name>
<organism>
    <name type="scientific">Mus musculus</name>
    <name type="common">Mouse</name>
    <dbReference type="NCBI Taxonomy" id="10090"/>
    <lineage>
        <taxon>Eukaryota</taxon>
        <taxon>Metazoa</taxon>
        <taxon>Chordata</taxon>
        <taxon>Craniata</taxon>
        <taxon>Vertebrata</taxon>
        <taxon>Euteleostomi</taxon>
        <taxon>Mammalia</taxon>
        <taxon>Eutheria</taxon>
        <taxon>Euarchontoglires</taxon>
        <taxon>Glires</taxon>
        <taxon>Rodentia</taxon>
        <taxon>Myomorpha</taxon>
        <taxon>Muroidea</taxon>
        <taxon>Muridae</taxon>
        <taxon>Murinae</taxon>
        <taxon>Mus</taxon>
        <taxon>Mus</taxon>
    </lineage>
</organism>
<accession>P57110</accession>
<proteinExistence type="evidence at transcript level"/>
<feature type="signal peptide" evidence="2">
    <location>
        <begin position="1"/>
        <end position="28"/>
    </location>
</feature>
<feature type="propeptide" id="PRO_0000029180" evidence="1">
    <location>
        <begin position="29"/>
        <end position="228"/>
    </location>
</feature>
<feature type="chain" id="PRO_0000029181" description="A disintegrin and metalloproteinase with thrombospondin motifs 8">
    <location>
        <begin position="229"/>
        <end position="905"/>
    </location>
</feature>
<feature type="domain" description="Peptidase M12B" evidence="4">
    <location>
        <begin position="234"/>
        <end position="444"/>
    </location>
</feature>
<feature type="domain" description="Disintegrin">
    <location>
        <begin position="453"/>
        <end position="541"/>
    </location>
</feature>
<feature type="domain" description="TSP type-1 1" evidence="3">
    <location>
        <begin position="542"/>
        <end position="597"/>
    </location>
</feature>
<feature type="domain" description="TSP type-1 2" evidence="3">
    <location>
        <begin position="848"/>
        <end position="904"/>
    </location>
</feature>
<feature type="region of interest" description="Disordered" evidence="6">
    <location>
        <begin position="139"/>
        <end position="163"/>
    </location>
</feature>
<feature type="region of interest" description="Disordered" evidence="6">
    <location>
        <begin position="186"/>
        <end position="225"/>
    </location>
</feature>
<feature type="region of interest" description="Spacer">
    <location>
        <begin position="706"/>
        <end position="847"/>
    </location>
</feature>
<feature type="region of interest" description="Disordered" evidence="6">
    <location>
        <begin position="877"/>
        <end position="905"/>
    </location>
</feature>
<feature type="compositionally biased region" description="Basic and acidic residues" evidence="6">
    <location>
        <begin position="191"/>
        <end position="215"/>
    </location>
</feature>
<feature type="active site" evidence="4 5">
    <location>
        <position position="379"/>
    </location>
</feature>
<feature type="binding site" evidence="1">
    <location>
        <position position="378"/>
    </location>
    <ligand>
        <name>Zn(2+)</name>
        <dbReference type="ChEBI" id="CHEBI:29105"/>
        <note>catalytic</note>
    </ligand>
</feature>
<feature type="binding site" evidence="1">
    <location>
        <position position="382"/>
    </location>
    <ligand>
        <name>Zn(2+)</name>
        <dbReference type="ChEBI" id="CHEBI:29105"/>
        <note>catalytic</note>
    </ligand>
</feature>
<feature type="binding site" evidence="1">
    <location>
        <position position="388"/>
    </location>
    <ligand>
        <name>Zn(2+)</name>
        <dbReference type="ChEBI" id="CHEBI:29105"/>
        <note>catalytic</note>
    </ligand>
</feature>
<feature type="glycosylation site" description="N-linked (GlcNAc...) asparagine" evidence="2">
    <location>
        <position position="415"/>
    </location>
</feature>
<feature type="glycosylation site" description="N-linked (GlcNAc...) asparagine" evidence="2">
    <location>
        <position position="480"/>
    </location>
</feature>
<feature type="glycosylation site" description="N-linked (GlcNAc...) asparagine" evidence="2">
    <location>
        <position position="506"/>
    </location>
</feature>
<feature type="glycosylation site" description="N-linked (GlcNAc...) asparagine" evidence="2">
    <location>
        <position position="615"/>
    </location>
</feature>
<feature type="disulfide bond" evidence="1">
    <location>
        <begin position="309"/>
        <end position="362"/>
    </location>
</feature>
<feature type="disulfide bond" evidence="1">
    <location>
        <begin position="338"/>
        <end position="344"/>
    </location>
</feature>
<feature type="disulfide bond" evidence="1">
    <location>
        <begin position="356"/>
        <end position="439"/>
    </location>
</feature>
<feature type="disulfide bond" evidence="1">
    <location>
        <begin position="394"/>
        <end position="423"/>
    </location>
</feature>
<feature type="disulfide bond" evidence="1">
    <location>
        <begin position="478"/>
        <end position="502"/>
    </location>
</feature>
<feature type="disulfide bond" evidence="1">
    <location>
        <begin position="487"/>
        <end position="523"/>
    </location>
</feature>
<feature type="disulfide bond" evidence="1">
    <location>
        <begin position="517"/>
        <end position="528"/>
    </location>
</feature>
<feature type="disulfide bond" evidence="1">
    <location>
        <begin position="554"/>
        <end position="591"/>
    </location>
</feature>
<feature type="disulfide bond" evidence="1">
    <location>
        <begin position="558"/>
        <end position="596"/>
    </location>
</feature>
<feature type="disulfide bond" evidence="1">
    <location>
        <begin position="569"/>
        <end position="581"/>
    </location>
</feature>
<comment type="function">
    <text evidence="1">Has anti-angiogenic properties.</text>
</comment>
<comment type="cofactor">
    <cofactor evidence="1">
        <name>Zn(2+)</name>
        <dbReference type="ChEBI" id="CHEBI:29105"/>
    </cofactor>
    <text evidence="1">Binds 1 zinc ion per subunit.</text>
</comment>
<comment type="subcellular location">
    <subcellularLocation>
        <location evidence="1">Secreted</location>
        <location evidence="1">Extracellular space</location>
        <location evidence="1">Extracellular matrix</location>
    </subcellularLocation>
</comment>
<comment type="tissue specificity">
    <text>Expressed specifically in adult lung and heart and low expression during mouse development.</text>
</comment>
<comment type="domain">
    <text>The spacer domain and the TSP type-1 domains are important for a tight interaction with the extracellular matrix.</text>
</comment>
<comment type="PTM">
    <text evidence="1">The precursor is cleaved by a furin endopeptidase.</text>
</comment>
<comment type="PTM">
    <text evidence="1">Glycosylated. Can be O-fucosylated by POFUT2 on a serine or a threonine residue found within the consensus sequence C1-X(2)-(S/T)-C2-G of the TSP type-1 repeat domains where C1 and C2 are the first and second cysteine residue of the repeat, respectively. Fucosylated repeats can then be further glycosylated by the addition of a beta-1,3-glucose residue by the glucosyltransferase, B3GALTL. Fucosylation mediates the efficient secretion of ADAMTS family members. Can also be C-glycosylated with one or two mannose molecules on tryptophan residues within the consensus sequence W-X-X-W of the TPRs, and N-glycosylated. These other glycosylations can also facilitate secretion (By similarity).</text>
</comment>
<dbReference type="EC" id="3.4.24.-"/>
<dbReference type="EMBL" id="AF175282">
    <property type="protein sequence ID" value="AAF25805.1"/>
    <property type="molecule type" value="mRNA"/>
</dbReference>
<dbReference type="CCDS" id="CCDS22946.1"/>
<dbReference type="SMR" id="P57110"/>
<dbReference type="BioGRID" id="205969">
    <property type="interactions" value="1"/>
</dbReference>
<dbReference type="FunCoup" id="P57110">
    <property type="interactions" value="53"/>
</dbReference>
<dbReference type="STRING" id="10090.ENSMUSP00000069644"/>
<dbReference type="MEROPS" id="M12.226"/>
<dbReference type="GlyCosmos" id="P57110">
    <property type="glycosylation" value="4 sites, No reported glycans"/>
</dbReference>
<dbReference type="GlyGen" id="P57110">
    <property type="glycosylation" value="4 sites"/>
</dbReference>
<dbReference type="PhosphoSitePlus" id="P57110"/>
<dbReference type="PaxDb" id="10090-ENSMUSP00000069644"/>
<dbReference type="ProteomicsDB" id="273587"/>
<dbReference type="DNASU" id="30806"/>
<dbReference type="AGR" id="MGI:1353468"/>
<dbReference type="MGI" id="MGI:1353468">
    <property type="gene designation" value="Adamts8"/>
</dbReference>
<dbReference type="eggNOG" id="KOG3538">
    <property type="taxonomic scope" value="Eukaryota"/>
</dbReference>
<dbReference type="InParanoid" id="P57110"/>
<dbReference type="PhylomeDB" id="P57110"/>
<dbReference type="Reactome" id="R-MMU-5173214">
    <property type="pathway name" value="O-glycosylation of TSR domain-containing proteins"/>
</dbReference>
<dbReference type="PRO" id="PR:P57110"/>
<dbReference type="Proteomes" id="UP000000589">
    <property type="component" value="Unplaced"/>
</dbReference>
<dbReference type="RNAct" id="P57110">
    <property type="molecule type" value="protein"/>
</dbReference>
<dbReference type="GO" id="GO:0005576">
    <property type="term" value="C:extracellular region"/>
    <property type="evidence" value="ECO:0007669"/>
    <property type="project" value="UniProtKB-KW"/>
</dbReference>
<dbReference type="GO" id="GO:0008201">
    <property type="term" value="F:heparin binding"/>
    <property type="evidence" value="ECO:0007669"/>
    <property type="project" value="UniProtKB-KW"/>
</dbReference>
<dbReference type="GO" id="GO:0004222">
    <property type="term" value="F:metalloendopeptidase activity"/>
    <property type="evidence" value="ECO:0007669"/>
    <property type="project" value="InterPro"/>
</dbReference>
<dbReference type="GO" id="GO:0008270">
    <property type="term" value="F:zinc ion binding"/>
    <property type="evidence" value="ECO:0007669"/>
    <property type="project" value="InterPro"/>
</dbReference>
<dbReference type="GO" id="GO:0030198">
    <property type="term" value="P:extracellular matrix organization"/>
    <property type="evidence" value="ECO:0007669"/>
    <property type="project" value="InterPro"/>
</dbReference>
<dbReference type="GO" id="GO:0006508">
    <property type="term" value="P:proteolysis"/>
    <property type="evidence" value="ECO:0007669"/>
    <property type="project" value="UniProtKB-KW"/>
</dbReference>
<dbReference type="CDD" id="cd04273">
    <property type="entry name" value="ZnMc_ADAMTS_like"/>
    <property type="match status" value="1"/>
</dbReference>
<dbReference type="FunFam" id="2.20.100.10:FF:000006">
    <property type="entry name" value="A disintegrin and metalloproteinase with thrombospondin motifs 1"/>
    <property type="match status" value="1"/>
</dbReference>
<dbReference type="FunFam" id="2.60.120.830:FF:000001">
    <property type="entry name" value="A disintegrin and metalloproteinase with thrombospondin motifs 1"/>
    <property type="match status" value="1"/>
</dbReference>
<dbReference type="FunFam" id="3.40.390.10:FF:000001">
    <property type="entry name" value="A disintegrin and metalloproteinase with thrombospondin motifs 1"/>
    <property type="match status" value="1"/>
</dbReference>
<dbReference type="FunFam" id="2.20.100.10:FF:000048">
    <property type="entry name" value="ADAM metallopeptidase with thrombospondin type 1 motif 8"/>
    <property type="match status" value="1"/>
</dbReference>
<dbReference type="Gene3D" id="2.60.120.830">
    <property type="match status" value="1"/>
</dbReference>
<dbReference type="Gene3D" id="3.40.1620.60">
    <property type="match status" value="1"/>
</dbReference>
<dbReference type="Gene3D" id="3.40.390.10">
    <property type="entry name" value="Collagenase (Catalytic Domain)"/>
    <property type="match status" value="1"/>
</dbReference>
<dbReference type="Gene3D" id="2.20.100.10">
    <property type="entry name" value="Thrombospondin type-1 (TSP1) repeat"/>
    <property type="match status" value="2"/>
</dbReference>
<dbReference type="InterPro" id="IPR006586">
    <property type="entry name" value="ADAM_Cys-rich"/>
</dbReference>
<dbReference type="InterPro" id="IPR013273">
    <property type="entry name" value="ADAMTS/ADAMTS-like"/>
</dbReference>
<dbReference type="InterPro" id="IPR050439">
    <property type="entry name" value="ADAMTS_ADAMTS-like"/>
</dbReference>
<dbReference type="InterPro" id="IPR041645">
    <property type="entry name" value="ADAMTS_CR_2"/>
</dbReference>
<dbReference type="InterPro" id="IPR045371">
    <property type="entry name" value="ADAMTS_CR_3"/>
</dbReference>
<dbReference type="InterPro" id="IPR010294">
    <property type="entry name" value="ADAMTS_spacer1"/>
</dbReference>
<dbReference type="InterPro" id="IPR024079">
    <property type="entry name" value="MetalloPept_cat_dom_sf"/>
</dbReference>
<dbReference type="InterPro" id="IPR013277">
    <property type="entry name" value="Pept_M12B_ADAM-TS8"/>
</dbReference>
<dbReference type="InterPro" id="IPR001590">
    <property type="entry name" value="Peptidase_M12B"/>
</dbReference>
<dbReference type="InterPro" id="IPR002870">
    <property type="entry name" value="Peptidase_M12B_N"/>
</dbReference>
<dbReference type="InterPro" id="IPR000884">
    <property type="entry name" value="TSP1_rpt"/>
</dbReference>
<dbReference type="InterPro" id="IPR036383">
    <property type="entry name" value="TSP1_rpt_sf"/>
</dbReference>
<dbReference type="PANTHER" id="PTHR13723:SF41">
    <property type="entry name" value="A DISINTEGRIN AND METALLOPROTEINASE WITH THROMBOSPONDIN MOTIFS 8"/>
    <property type="match status" value="1"/>
</dbReference>
<dbReference type="PANTHER" id="PTHR13723">
    <property type="entry name" value="ADAMTS A DISINTEGRIN AND METALLOPROTEASE WITH THROMBOSPONDIN MOTIFS PROTEASE"/>
    <property type="match status" value="1"/>
</dbReference>
<dbReference type="Pfam" id="PF17771">
    <property type="entry name" value="ADAMTS_CR_2"/>
    <property type="match status" value="1"/>
</dbReference>
<dbReference type="Pfam" id="PF19236">
    <property type="entry name" value="ADAMTS_CR_3"/>
    <property type="match status" value="1"/>
</dbReference>
<dbReference type="Pfam" id="PF05986">
    <property type="entry name" value="ADAMTS_spacer1"/>
    <property type="match status" value="1"/>
</dbReference>
<dbReference type="Pfam" id="PF01562">
    <property type="entry name" value="Pep_M12B_propep"/>
    <property type="match status" value="1"/>
</dbReference>
<dbReference type="Pfam" id="PF01421">
    <property type="entry name" value="Reprolysin"/>
    <property type="match status" value="1"/>
</dbReference>
<dbReference type="Pfam" id="PF19030">
    <property type="entry name" value="TSP1_ADAMTS"/>
    <property type="match status" value="1"/>
</dbReference>
<dbReference type="Pfam" id="PF00090">
    <property type="entry name" value="TSP_1"/>
    <property type="match status" value="1"/>
</dbReference>
<dbReference type="PRINTS" id="PR01861">
    <property type="entry name" value="ADAMTS8"/>
</dbReference>
<dbReference type="PRINTS" id="PR01857">
    <property type="entry name" value="ADAMTSFAMILY"/>
</dbReference>
<dbReference type="SMART" id="SM00608">
    <property type="entry name" value="ACR"/>
    <property type="match status" value="1"/>
</dbReference>
<dbReference type="SMART" id="SM00209">
    <property type="entry name" value="TSP1"/>
    <property type="match status" value="2"/>
</dbReference>
<dbReference type="SUPFAM" id="SSF55486">
    <property type="entry name" value="Metalloproteases ('zincins'), catalytic domain"/>
    <property type="match status" value="1"/>
</dbReference>
<dbReference type="SUPFAM" id="SSF82895">
    <property type="entry name" value="TSP-1 type 1 repeat"/>
    <property type="match status" value="2"/>
</dbReference>
<dbReference type="PROSITE" id="PS50215">
    <property type="entry name" value="ADAM_MEPRO"/>
    <property type="match status" value="1"/>
</dbReference>
<dbReference type="PROSITE" id="PS50092">
    <property type="entry name" value="TSP1"/>
    <property type="match status" value="2"/>
</dbReference>
<dbReference type="PROSITE" id="PS00142">
    <property type="entry name" value="ZINC_PROTEASE"/>
    <property type="match status" value="1"/>
</dbReference>
<reference key="1">
    <citation type="journal article" date="1999" name="Genomics">
        <title>ADAM-TS8, a novel metalloprotease of the ADAM-TS family located on mouse chromosome 9 and human chromosome 11.</title>
        <authorList>
            <person name="Georgiadis K.E."/>
            <person name="Hirohata S."/>
            <person name="Seldin M.F."/>
            <person name="Apte S.S."/>
        </authorList>
    </citation>
    <scope>NUCLEOTIDE SEQUENCE [MRNA]</scope>
</reference>
<gene>
    <name type="primary">Adamts8</name>
</gene>
<evidence type="ECO:0000250" key="1"/>
<evidence type="ECO:0000255" key="2"/>
<evidence type="ECO:0000255" key="3">
    <source>
        <dbReference type="PROSITE-ProRule" id="PRU00210"/>
    </source>
</evidence>
<evidence type="ECO:0000255" key="4">
    <source>
        <dbReference type="PROSITE-ProRule" id="PRU00276"/>
    </source>
</evidence>
<evidence type="ECO:0000255" key="5">
    <source>
        <dbReference type="PROSITE-ProRule" id="PRU10095"/>
    </source>
</evidence>
<evidence type="ECO:0000256" key="6">
    <source>
        <dbReference type="SAM" id="MobiDB-lite"/>
    </source>
</evidence>